<dbReference type="EMBL" id="CP000544">
    <property type="protein sequence ID" value="ABM61645.1"/>
    <property type="molecule type" value="Genomic_DNA"/>
</dbReference>
<dbReference type="RefSeq" id="WP_011813668.1">
    <property type="nucleotide sequence ID" value="NC_008789.1"/>
</dbReference>
<dbReference type="SMR" id="A1WVD3"/>
<dbReference type="STRING" id="349124.Hhal_0869"/>
<dbReference type="KEGG" id="hha:Hhal_0869"/>
<dbReference type="eggNOG" id="COG0080">
    <property type="taxonomic scope" value="Bacteria"/>
</dbReference>
<dbReference type="HOGENOM" id="CLU_074237_2_0_6"/>
<dbReference type="OrthoDB" id="9802408at2"/>
<dbReference type="Proteomes" id="UP000000647">
    <property type="component" value="Chromosome"/>
</dbReference>
<dbReference type="GO" id="GO:0022625">
    <property type="term" value="C:cytosolic large ribosomal subunit"/>
    <property type="evidence" value="ECO:0007669"/>
    <property type="project" value="TreeGrafter"/>
</dbReference>
<dbReference type="GO" id="GO:0070180">
    <property type="term" value="F:large ribosomal subunit rRNA binding"/>
    <property type="evidence" value="ECO:0007669"/>
    <property type="project" value="UniProtKB-UniRule"/>
</dbReference>
<dbReference type="GO" id="GO:0003735">
    <property type="term" value="F:structural constituent of ribosome"/>
    <property type="evidence" value="ECO:0007669"/>
    <property type="project" value="InterPro"/>
</dbReference>
<dbReference type="GO" id="GO:0006412">
    <property type="term" value="P:translation"/>
    <property type="evidence" value="ECO:0007669"/>
    <property type="project" value="UniProtKB-UniRule"/>
</dbReference>
<dbReference type="CDD" id="cd00349">
    <property type="entry name" value="Ribosomal_L11"/>
    <property type="match status" value="1"/>
</dbReference>
<dbReference type="FunFam" id="1.10.10.250:FF:000001">
    <property type="entry name" value="50S ribosomal protein L11"/>
    <property type="match status" value="1"/>
</dbReference>
<dbReference type="FunFam" id="3.30.1550.10:FF:000001">
    <property type="entry name" value="50S ribosomal protein L11"/>
    <property type="match status" value="1"/>
</dbReference>
<dbReference type="Gene3D" id="1.10.10.250">
    <property type="entry name" value="Ribosomal protein L11, C-terminal domain"/>
    <property type="match status" value="1"/>
</dbReference>
<dbReference type="Gene3D" id="3.30.1550.10">
    <property type="entry name" value="Ribosomal protein L11/L12, N-terminal domain"/>
    <property type="match status" value="1"/>
</dbReference>
<dbReference type="HAMAP" id="MF_00736">
    <property type="entry name" value="Ribosomal_uL11"/>
    <property type="match status" value="1"/>
</dbReference>
<dbReference type="InterPro" id="IPR000911">
    <property type="entry name" value="Ribosomal_uL11"/>
</dbReference>
<dbReference type="InterPro" id="IPR006519">
    <property type="entry name" value="Ribosomal_uL11_bac-typ"/>
</dbReference>
<dbReference type="InterPro" id="IPR020783">
    <property type="entry name" value="Ribosomal_uL11_C"/>
</dbReference>
<dbReference type="InterPro" id="IPR036769">
    <property type="entry name" value="Ribosomal_uL11_C_sf"/>
</dbReference>
<dbReference type="InterPro" id="IPR020785">
    <property type="entry name" value="Ribosomal_uL11_CS"/>
</dbReference>
<dbReference type="InterPro" id="IPR020784">
    <property type="entry name" value="Ribosomal_uL11_N"/>
</dbReference>
<dbReference type="InterPro" id="IPR036796">
    <property type="entry name" value="Ribosomal_uL11_N_sf"/>
</dbReference>
<dbReference type="NCBIfam" id="TIGR01632">
    <property type="entry name" value="L11_bact"/>
    <property type="match status" value="1"/>
</dbReference>
<dbReference type="PANTHER" id="PTHR11661">
    <property type="entry name" value="60S RIBOSOMAL PROTEIN L12"/>
    <property type="match status" value="1"/>
</dbReference>
<dbReference type="PANTHER" id="PTHR11661:SF1">
    <property type="entry name" value="LARGE RIBOSOMAL SUBUNIT PROTEIN UL11M"/>
    <property type="match status" value="1"/>
</dbReference>
<dbReference type="Pfam" id="PF00298">
    <property type="entry name" value="Ribosomal_L11"/>
    <property type="match status" value="1"/>
</dbReference>
<dbReference type="Pfam" id="PF03946">
    <property type="entry name" value="Ribosomal_L11_N"/>
    <property type="match status" value="1"/>
</dbReference>
<dbReference type="SMART" id="SM00649">
    <property type="entry name" value="RL11"/>
    <property type="match status" value="1"/>
</dbReference>
<dbReference type="SUPFAM" id="SSF54747">
    <property type="entry name" value="Ribosomal L11/L12e N-terminal domain"/>
    <property type="match status" value="1"/>
</dbReference>
<dbReference type="SUPFAM" id="SSF46906">
    <property type="entry name" value="Ribosomal protein L11, C-terminal domain"/>
    <property type="match status" value="1"/>
</dbReference>
<dbReference type="PROSITE" id="PS00359">
    <property type="entry name" value="RIBOSOMAL_L11"/>
    <property type="match status" value="1"/>
</dbReference>
<protein>
    <recommendedName>
        <fullName evidence="1">Large ribosomal subunit protein uL11</fullName>
    </recommendedName>
    <alternativeName>
        <fullName evidence="2">50S ribosomal protein L11</fullName>
    </alternativeName>
</protein>
<reference key="1">
    <citation type="submission" date="2006-12" db="EMBL/GenBank/DDBJ databases">
        <title>Complete sequence of Halorhodospira halophila SL1.</title>
        <authorList>
            <consortium name="US DOE Joint Genome Institute"/>
            <person name="Copeland A."/>
            <person name="Lucas S."/>
            <person name="Lapidus A."/>
            <person name="Barry K."/>
            <person name="Detter J.C."/>
            <person name="Glavina del Rio T."/>
            <person name="Hammon N."/>
            <person name="Israni S."/>
            <person name="Dalin E."/>
            <person name="Tice H."/>
            <person name="Pitluck S."/>
            <person name="Saunders E."/>
            <person name="Brettin T."/>
            <person name="Bruce D."/>
            <person name="Han C."/>
            <person name="Tapia R."/>
            <person name="Schmutz J."/>
            <person name="Larimer F."/>
            <person name="Land M."/>
            <person name="Hauser L."/>
            <person name="Kyrpides N."/>
            <person name="Mikhailova N."/>
            <person name="Hoff W."/>
            <person name="Richardson P."/>
        </authorList>
    </citation>
    <scope>NUCLEOTIDE SEQUENCE [LARGE SCALE GENOMIC DNA]</scope>
    <source>
        <strain>DSM 244 / SL1</strain>
    </source>
</reference>
<feature type="chain" id="PRO_1000046189" description="Large ribosomal subunit protein uL11">
    <location>
        <begin position="1"/>
        <end position="143"/>
    </location>
</feature>
<name>RL11_HALHL</name>
<sequence length="143" mass="15088">MAKKIEAYIKLQVPAGQANPSPPVGPALGQHGLNIMEFCKAFNAQTQEMEGGLPIPVVITVYSDRSFTFVTKTPPAPVLLLKAIGAKGGSGTPNTKKVGTVQRDQLEEIARTKWPDLNASDMDAAVRSIAGTARSMGIDVEGV</sequence>
<gene>
    <name evidence="1" type="primary">rplK</name>
    <name type="ordered locus">Hhal_0869</name>
</gene>
<accession>A1WVD3</accession>
<evidence type="ECO:0000255" key="1">
    <source>
        <dbReference type="HAMAP-Rule" id="MF_00736"/>
    </source>
</evidence>
<evidence type="ECO:0000305" key="2"/>
<comment type="function">
    <text evidence="1">Forms part of the ribosomal stalk which helps the ribosome interact with GTP-bound translation factors.</text>
</comment>
<comment type="subunit">
    <text evidence="1">Part of the ribosomal stalk of the 50S ribosomal subunit. Interacts with L10 and the large rRNA to form the base of the stalk. L10 forms an elongated spine to which L12 dimers bind in a sequential fashion forming a multimeric L10(L12)X complex.</text>
</comment>
<comment type="PTM">
    <text evidence="1">One or more lysine residues are methylated.</text>
</comment>
<comment type="similarity">
    <text evidence="1">Belongs to the universal ribosomal protein uL11 family.</text>
</comment>
<proteinExistence type="inferred from homology"/>
<keyword id="KW-0488">Methylation</keyword>
<keyword id="KW-1185">Reference proteome</keyword>
<keyword id="KW-0687">Ribonucleoprotein</keyword>
<keyword id="KW-0689">Ribosomal protein</keyword>
<keyword id="KW-0694">RNA-binding</keyword>
<keyword id="KW-0699">rRNA-binding</keyword>
<organism>
    <name type="scientific">Halorhodospira halophila (strain DSM 244 / SL1)</name>
    <name type="common">Ectothiorhodospira halophila (strain DSM 244 / SL1)</name>
    <dbReference type="NCBI Taxonomy" id="349124"/>
    <lineage>
        <taxon>Bacteria</taxon>
        <taxon>Pseudomonadati</taxon>
        <taxon>Pseudomonadota</taxon>
        <taxon>Gammaproteobacteria</taxon>
        <taxon>Chromatiales</taxon>
        <taxon>Ectothiorhodospiraceae</taxon>
        <taxon>Halorhodospira</taxon>
    </lineage>
</organism>